<reference key="1">
    <citation type="journal article" date="2006" name="Genome Res.">
        <title>Skewed genomic variability in strains of the toxigenic bacterial pathogen, Clostridium perfringens.</title>
        <authorList>
            <person name="Myers G.S.A."/>
            <person name="Rasko D.A."/>
            <person name="Cheung J.K."/>
            <person name="Ravel J."/>
            <person name="Seshadri R."/>
            <person name="DeBoy R.T."/>
            <person name="Ren Q."/>
            <person name="Varga J."/>
            <person name="Awad M.M."/>
            <person name="Brinkac L.M."/>
            <person name="Daugherty S.C."/>
            <person name="Haft D.H."/>
            <person name="Dodson R.J."/>
            <person name="Madupu R."/>
            <person name="Nelson W.C."/>
            <person name="Rosovitz M.J."/>
            <person name="Sullivan S.A."/>
            <person name="Khouri H."/>
            <person name="Dimitrov G.I."/>
            <person name="Watkins K.L."/>
            <person name="Mulligan S."/>
            <person name="Benton J."/>
            <person name="Radune D."/>
            <person name="Fisher D.J."/>
            <person name="Atkins H.S."/>
            <person name="Hiscox T."/>
            <person name="Jost B.H."/>
            <person name="Billington S.J."/>
            <person name="Songer J.G."/>
            <person name="McClane B.A."/>
            <person name="Titball R.W."/>
            <person name="Rood J.I."/>
            <person name="Melville S.B."/>
            <person name="Paulsen I.T."/>
        </authorList>
    </citation>
    <scope>NUCLEOTIDE SEQUENCE [LARGE SCALE GENOMIC DNA]</scope>
    <source>
        <strain>SM101 / Type A</strain>
    </source>
</reference>
<keyword id="KW-0067">ATP-binding</keyword>
<keyword id="KW-0963">Cytoplasm</keyword>
<keyword id="KW-0418">Kinase</keyword>
<keyword id="KW-0479">Metal-binding</keyword>
<keyword id="KW-0545">Nucleotide biosynthesis</keyword>
<keyword id="KW-0547">Nucleotide-binding</keyword>
<keyword id="KW-0808">Transferase</keyword>
<keyword id="KW-0862">Zinc</keyword>
<feature type="chain" id="PRO_1000021724" description="Adenylate kinase">
    <location>
        <begin position="1"/>
        <end position="216"/>
    </location>
</feature>
<feature type="region of interest" description="NMP" evidence="1">
    <location>
        <begin position="30"/>
        <end position="59"/>
    </location>
</feature>
<feature type="region of interest" description="LID" evidence="1">
    <location>
        <begin position="126"/>
        <end position="163"/>
    </location>
</feature>
<feature type="binding site" evidence="1">
    <location>
        <begin position="10"/>
        <end position="15"/>
    </location>
    <ligand>
        <name>ATP</name>
        <dbReference type="ChEBI" id="CHEBI:30616"/>
    </ligand>
</feature>
<feature type="binding site" evidence="1">
    <location>
        <position position="31"/>
    </location>
    <ligand>
        <name>AMP</name>
        <dbReference type="ChEBI" id="CHEBI:456215"/>
    </ligand>
</feature>
<feature type="binding site" evidence="1">
    <location>
        <position position="36"/>
    </location>
    <ligand>
        <name>AMP</name>
        <dbReference type="ChEBI" id="CHEBI:456215"/>
    </ligand>
</feature>
<feature type="binding site" evidence="1">
    <location>
        <begin position="57"/>
        <end position="59"/>
    </location>
    <ligand>
        <name>AMP</name>
        <dbReference type="ChEBI" id="CHEBI:456215"/>
    </ligand>
</feature>
<feature type="binding site" evidence="1">
    <location>
        <begin position="85"/>
        <end position="88"/>
    </location>
    <ligand>
        <name>AMP</name>
        <dbReference type="ChEBI" id="CHEBI:456215"/>
    </ligand>
</feature>
<feature type="binding site" evidence="1">
    <location>
        <position position="92"/>
    </location>
    <ligand>
        <name>AMP</name>
        <dbReference type="ChEBI" id="CHEBI:456215"/>
    </ligand>
</feature>
<feature type="binding site" evidence="1">
    <location>
        <position position="127"/>
    </location>
    <ligand>
        <name>ATP</name>
        <dbReference type="ChEBI" id="CHEBI:30616"/>
    </ligand>
</feature>
<feature type="binding site" evidence="1">
    <location>
        <position position="130"/>
    </location>
    <ligand>
        <name>Zn(2+)</name>
        <dbReference type="ChEBI" id="CHEBI:29105"/>
        <note>structural</note>
    </ligand>
</feature>
<feature type="binding site" evidence="1">
    <location>
        <position position="133"/>
    </location>
    <ligand>
        <name>Zn(2+)</name>
        <dbReference type="ChEBI" id="CHEBI:29105"/>
        <note>structural</note>
    </ligand>
</feature>
<feature type="binding site" evidence="1">
    <location>
        <begin position="136"/>
        <end position="137"/>
    </location>
    <ligand>
        <name>ATP</name>
        <dbReference type="ChEBI" id="CHEBI:30616"/>
    </ligand>
</feature>
<feature type="binding site" evidence="1">
    <location>
        <position position="150"/>
    </location>
    <ligand>
        <name>Zn(2+)</name>
        <dbReference type="ChEBI" id="CHEBI:29105"/>
        <note>structural</note>
    </ligand>
</feature>
<feature type="binding site" evidence="1">
    <location>
        <position position="153"/>
    </location>
    <ligand>
        <name>Zn(2+)</name>
        <dbReference type="ChEBI" id="CHEBI:29105"/>
        <note>structural</note>
    </ligand>
</feature>
<feature type="binding site" evidence="1">
    <location>
        <position position="160"/>
    </location>
    <ligand>
        <name>AMP</name>
        <dbReference type="ChEBI" id="CHEBI:456215"/>
    </ligand>
</feature>
<feature type="binding site" evidence="1">
    <location>
        <position position="171"/>
    </location>
    <ligand>
        <name>AMP</name>
        <dbReference type="ChEBI" id="CHEBI:456215"/>
    </ligand>
</feature>
<feature type="binding site" evidence="1">
    <location>
        <position position="199"/>
    </location>
    <ligand>
        <name>ATP</name>
        <dbReference type="ChEBI" id="CHEBI:30616"/>
    </ligand>
</feature>
<dbReference type="EC" id="2.7.4.3" evidence="1"/>
<dbReference type="EMBL" id="CP000312">
    <property type="protein sequence ID" value="ABG87513.1"/>
    <property type="molecule type" value="Genomic_DNA"/>
</dbReference>
<dbReference type="RefSeq" id="WP_003454337.1">
    <property type="nucleotide sequence ID" value="NZ_CAXVKH010000004.1"/>
</dbReference>
<dbReference type="SMR" id="Q0SQG5"/>
<dbReference type="KEGG" id="cpr:CPR_2378"/>
<dbReference type="UniPathway" id="UPA00588">
    <property type="reaction ID" value="UER00649"/>
</dbReference>
<dbReference type="Proteomes" id="UP000001824">
    <property type="component" value="Chromosome"/>
</dbReference>
<dbReference type="GO" id="GO:0005737">
    <property type="term" value="C:cytoplasm"/>
    <property type="evidence" value="ECO:0007669"/>
    <property type="project" value="UniProtKB-SubCell"/>
</dbReference>
<dbReference type="GO" id="GO:0004017">
    <property type="term" value="F:adenylate kinase activity"/>
    <property type="evidence" value="ECO:0007669"/>
    <property type="project" value="UniProtKB-UniRule"/>
</dbReference>
<dbReference type="GO" id="GO:0005524">
    <property type="term" value="F:ATP binding"/>
    <property type="evidence" value="ECO:0007669"/>
    <property type="project" value="UniProtKB-UniRule"/>
</dbReference>
<dbReference type="GO" id="GO:0008270">
    <property type="term" value="F:zinc ion binding"/>
    <property type="evidence" value="ECO:0007669"/>
    <property type="project" value="UniProtKB-UniRule"/>
</dbReference>
<dbReference type="GO" id="GO:0044209">
    <property type="term" value="P:AMP salvage"/>
    <property type="evidence" value="ECO:0007669"/>
    <property type="project" value="UniProtKB-UniRule"/>
</dbReference>
<dbReference type="CDD" id="cd01428">
    <property type="entry name" value="ADK"/>
    <property type="match status" value="1"/>
</dbReference>
<dbReference type="FunFam" id="3.40.50.300:FF:000106">
    <property type="entry name" value="Adenylate kinase mitochondrial"/>
    <property type="match status" value="1"/>
</dbReference>
<dbReference type="Gene3D" id="3.40.50.300">
    <property type="entry name" value="P-loop containing nucleotide triphosphate hydrolases"/>
    <property type="match status" value="1"/>
</dbReference>
<dbReference type="HAMAP" id="MF_00235">
    <property type="entry name" value="Adenylate_kinase_Adk"/>
    <property type="match status" value="1"/>
</dbReference>
<dbReference type="InterPro" id="IPR006259">
    <property type="entry name" value="Adenyl_kin_sub"/>
</dbReference>
<dbReference type="InterPro" id="IPR000850">
    <property type="entry name" value="Adenylat/UMP-CMP_kin"/>
</dbReference>
<dbReference type="InterPro" id="IPR033690">
    <property type="entry name" value="Adenylat_kinase_CS"/>
</dbReference>
<dbReference type="InterPro" id="IPR007862">
    <property type="entry name" value="Adenylate_kinase_lid-dom"/>
</dbReference>
<dbReference type="InterPro" id="IPR027417">
    <property type="entry name" value="P-loop_NTPase"/>
</dbReference>
<dbReference type="NCBIfam" id="TIGR01351">
    <property type="entry name" value="adk"/>
    <property type="match status" value="1"/>
</dbReference>
<dbReference type="NCBIfam" id="NF001379">
    <property type="entry name" value="PRK00279.1-1"/>
    <property type="match status" value="1"/>
</dbReference>
<dbReference type="NCBIfam" id="NF001380">
    <property type="entry name" value="PRK00279.1-2"/>
    <property type="match status" value="1"/>
</dbReference>
<dbReference type="NCBIfam" id="NF001381">
    <property type="entry name" value="PRK00279.1-3"/>
    <property type="match status" value="1"/>
</dbReference>
<dbReference type="NCBIfam" id="NF011100">
    <property type="entry name" value="PRK14527.1"/>
    <property type="match status" value="1"/>
</dbReference>
<dbReference type="PANTHER" id="PTHR23359">
    <property type="entry name" value="NUCLEOTIDE KINASE"/>
    <property type="match status" value="1"/>
</dbReference>
<dbReference type="Pfam" id="PF00406">
    <property type="entry name" value="ADK"/>
    <property type="match status" value="1"/>
</dbReference>
<dbReference type="Pfam" id="PF05191">
    <property type="entry name" value="ADK_lid"/>
    <property type="match status" value="1"/>
</dbReference>
<dbReference type="PRINTS" id="PR00094">
    <property type="entry name" value="ADENYLTKNASE"/>
</dbReference>
<dbReference type="SUPFAM" id="SSF52540">
    <property type="entry name" value="P-loop containing nucleoside triphosphate hydrolases"/>
    <property type="match status" value="1"/>
</dbReference>
<dbReference type="PROSITE" id="PS00113">
    <property type="entry name" value="ADENYLATE_KINASE"/>
    <property type="match status" value="1"/>
</dbReference>
<protein>
    <recommendedName>
        <fullName evidence="1">Adenylate kinase</fullName>
        <shortName evidence="1">AK</shortName>
        <ecNumber evidence="1">2.7.4.3</ecNumber>
    </recommendedName>
    <alternativeName>
        <fullName evidence="1">ATP-AMP transphosphorylase</fullName>
    </alternativeName>
    <alternativeName>
        <fullName evidence="1">ATP:AMP phosphotransferase</fullName>
    </alternativeName>
    <alternativeName>
        <fullName evidence="1">Adenylate monophosphate kinase</fullName>
    </alternativeName>
</protein>
<proteinExistence type="inferred from homology"/>
<name>KAD_CLOPS</name>
<accession>Q0SQG5</accession>
<evidence type="ECO:0000255" key="1">
    <source>
        <dbReference type="HAMAP-Rule" id="MF_00235"/>
    </source>
</evidence>
<comment type="function">
    <text evidence="1">Catalyzes the reversible transfer of the terminal phosphate group between ATP and AMP. Plays an important role in cellular energy homeostasis and in adenine nucleotide metabolism.</text>
</comment>
<comment type="catalytic activity">
    <reaction evidence="1">
        <text>AMP + ATP = 2 ADP</text>
        <dbReference type="Rhea" id="RHEA:12973"/>
        <dbReference type="ChEBI" id="CHEBI:30616"/>
        <dbReference type="ChEBI" id="CHEBI:456215"/>
        <dbReference type="ChEBI" id="CHEBI:456216"/>
        <dbReference type="EC" id="2.7.4.3"/>
    </reaction>
</comment>
<comment type="pathway">
    <text evidence="1">Purine metabolism; AMP biosynthesis via salvage pathway; AMP from ADP: step 1/1.</text>
</comment>
<comment type="subunit">
    <text evidence="1">Monomer.</text>
</comment>
<comment type="subcellular location">
    <subcellularLocation>
        <location evidence="1">Cytoplasm</location>
    </subcellularLocation>
</comment>
<comment type="domain">
    <text evidence="1">Consists of three domains, a large central CORE domain and two small peripheral domains, NMPbind and LID, which undergo movements during catalysis. The LID domain closes over the site of phosphoryl transfer upon ATP binding. Assembling and dissambling the active center during each catalytic cycle provides an effective means to prevent ATP hydrolysis. Some bacteria have evolved a zinc-coordinating structure that stabilizes the LID domain.</text>
</comment>
<comment type="similarity">
    <text evidence="1">Belongs to the adenylate kinase family.</text>
</comment>
<gene>
    <name evidence="1" type="primary">adk</name>
    <name type="ordered locus">CPR_2378</name>
</gene>
<sequence length="216" mass="24186">MKIVLLGPPGAGKGTQAKSISNRYSIPHISTGDIFRKNISENTPLGIEAKSYMDNGQLVPDEVTINMVKDRLQQDDCKNGYLLDGFPRTVHQAEALDNFLTEREESIDTALLIEVPKEFILERMTGRRVCPSCGASYHIKFNPPTNDGKCDLCGSDVIQRKDDTEETVKERLDVYENQTQPLIDFYKNKKQLSVVDGTQAINEVFESICKILGSDK</sequence>
<organism>
    <name type="scientific">Clostridium perfringens (strain SM101 / Type A)</name>
    <dbReference type="NCBI Taxonomy" id="289380"/>
    <lineage>
        <taxon>Bacteria</taxon>
        <taxon>Bacillati</taxon>
        <taxon>Bacillota</taxon>
        <taxon>Clostridia</taxon>
        <taxon>Eubacteriales</taxon>
        <taxon>Clostridiaceae</taxon>
        <taxon>Clostridium</taxon>
    </lineage>
</organism>